<reference key="1">
    <citation type="submission" date="2008-12" db="EMBL/GenBank/DDBJ databases">
        <title>Complete sequence of chromosome of Methylobacterium chloromethanicum CM4.</title>
        <authorList>
            <consortium name="US DOE Joint Genome Institute"/>
            <person name="Lucas S."/>
            <person name="Copeland A."/>
            <person name="Lapidus A."/>
            <person name="Glavina del Rio T."/>
            <person name="Dalin E."/>
            <person name="Tice H."/>
            <person name="Bruce D."/>
            <person name="Goodwin L."/>
            <person name="Pitluck S."/>
            <person name="Chertkov O."/>
            <person name="Brettin T."/>
            <person name="Detter J.C."/>
            <person name="Han C."/>
            <person name="Larimer F."/>
            <person name="Land M."/>
            <person name="Hauser L."/>
            <person name="Kyrpides N."/>
            <person name="Mikhailova N."/>
            <person name="Marx C."/>
            <person name="Richardson P."/>
        </authorList>
    </citation>
    <scope>NUCLEOTIDE SEQUENCE [LARGE SCALE GENOMIC DNA]</scope>
    <source>
        <strain>CM4 / NCIMB 13688</strain>
    </source>
</reference>
<feature type="chain" id="PRO_1000195080" description="Dihydroorotate dehydrogenase (quinone)">
    <location>
        <begin position="1"/>
        <end position="358"/>
    </location>
</feature>
<feature type="active site" description="Nucleophile" evidence="1">
    <location>
        <position position="173"/>
    </location>
</feature>
<feature type="binding site" evidence="1">
    <location>
        <begin position="61"/>
        <end position="65"/>
    </location>
    <ligand>
        <name>FMN</name>
        <dbReference type="ChEBI" id="CHEBI:58210"/>
    </ligand>
</feature>
<feature type="binding site" evidence="1">
    <location>
        <position position="65"/>
    </location>
    <ligand>
        <name>substrate</name>
    </ligand>
</feature>
<feature type="binding site" evidence="1">
    <location>
        <position position="85"/>
    </location>
    <ligand>
        <name>FMN</name>
        <dbReference type="ChEBI" id="CHEBI:58210"/>
    </ligand>
</feature>
<feature type="binding site" evidence="1">
    <location>
        <begin position="110"/>
        <end position="114"/>
    </location>
    <ligand>
        <name>substrate</name>
    </ligand>
</feature>
<feature type="binding site" evidence="1">
    <location>
        <position position="139"/>
    </location>
    <ligand>
        <name>FMN</name>
        <dbReference type="ChEBI" id="CHEBI:58210"/>
    </ligand>
</feature>
<feature type="binding site" evidence="1">
    <location>
        <position position="170"/>
    </location>
    <ligand>
        <name>FMN</name>
        <dbReference type="ChEBI" id="CHEBI:58210"/>
    </ligand>
</feature>
<feature type="binding site" evidence="1">
    <location>
        <position position="170"/>
    </location>
    <ligand>
        <name>substrate</name>
    </ligand>
</feature>
<feature type="binding site" evidence="1">
    <location>
        <position position="175"/>
    </location>
    <ligand>
        <name>substrate</name>
    </ligand>
</feature>
<feature type="binding site" evidence="1">
    <location>
        <position position="211"/>
    </location>
    <ligand>
        <name>FMN</name>
        <dbReference type="ChEBI" id="CHEBI:58210"/>
    </ligand>
</feature>
<feature type="binding site" evidence="1">
    <location>
        <position position="239"/>
    </location>
    <ligand>
        <name>FMN</name>
        <dbReference type="ChEBI" id="CHEBI:58210"/>
    </ligand>
</feature>
<feature type="binding site" evidence="1">
    <location>
        <begin position="240"/>
        <end position="241"/>
    </location>
    <ligand>
        <name>substrate</name>
    </ligand>
</feature>
<feature type="binding site" evidence="1">
    <location>
        <position position="263"/>
    </location>
    <ligand>
        <name>FMN</name>
        <dbReference type="ChEBI" id="CHEBI:58210"/>
    </ligand>
</feature>
<feature type="binding site" evidence="1">
    <location>
        <position position="292"/>
    </location>
    <ligand>
        <name>FMN</name>
        <dbReference type="ChEBI" id="CHEBI:58210"/>
    </ligand>
</feature>
<feature type="binding site" evidence="1">
    <location>
        <begin position="313"/>
        <end position="314"/>
    </location>
    <ligand>
        <name>FMN</name>
        <dbReference type="ChEBI" id="CHEBI:58210"/>
    </ligand>
</feature>
<keyword id="KW-1003">Cell membrane</keyword>
<keyword id="KW-0285">Flavoprotein</keyword>
<keyword id="KW-0288">FMN</keyword>
<keyword id="KW-0472">Membrane</keyword>
<keyword id="KW-0560">Oxidoreductase</keyword>
<keyword id="KW-0665">Pyrimidine biosynthesis</keyword>
<name>PYRD_METC4</name>
<dbReference type="EC" id="1.3.5.2" evidence="1"/>
<dbReference type="EMBL" id="CP001298">
    <property type="protein sequence ID" value="ACK83227.1"/>
    <property type="molecule type" value="Genomic_DNA"/>
</dbReference>
<dbReference type="RefSeq" id="WP_015950843.1">
    <property type="nucleotide sequence ID" value="NC_011757.1"/>
</dbReference>
<dbReference type="SMR" id="B7KZJ5"/>
<dbReference type="KEGG" id="mch:Mchl_2382"/>
<dbReference type="HOGENOM" id="CLU_013640_2_1_5"/>
<dbReference type="UniPathway" id="UPA00070">
    <property type="reaction ID" value="UER00946"/>
</dbReference>
<dbReference type="Proteomes" id="UP000002385">
    <property type="component" value="Chromosome"/>
</dbReference>
<dbReference type="GO" id="GO:0005737">
    <property type="term" value="C:cytoplasm"/>
    <property type="evidence" value="ECO:0007669"/>
    <property type="project" value="InterPro"/>
</dbReference>
<dbReference type="GO" id="GO:0005886">
    <property type="term" value="C:plasma membrane"/>
    <property type="evidence" value="ECO:0007669"/>
    <property type="project" value="UniProtKB-SubCell"/>
</dbReference>
<dbReference type="GO" id="GO:0106430">
    <property type="term" value="F:dihydroorotate dehydrogenase (quinone) activity"/>
    <property type="evidence" value="ECO:0007669"/>
    <property type="project" value="UniProtKB-EC"/>
</dbReference>
<dbReference type="GO" id="GO:0006207">
    <property type="term" value="P:'de novo' pyrimidine nucleobase biosynthetic process"/>
    <property type="evidence" value="ECO:0007669"/>
    <property type="project" value="InterPro"/>
</dbReference>
<dbReference type="GO" id="GO:0044205">
    <property type="term" value="P:'de novo' UMP biosynthetic process"/>
    <property type="evidence" value="ECO:0007669"/>
    <property type="project" value="UniProtKB-UniRule"/>
</dbReference>
<dbReference type="CDD" id="cd04738">
    <property type="entry name" value="DHOD_2_like"/>
    <property type="match status" value="1"/>
</dbReference>
<dbReference type="Gene3D" id="3.20.20.70">
    <property type="entry name" value="Aldolase class I"/>
    <property type="match status" value="1"/>
</dbReference>
<dbReference type="HAMAP" id="MF_00225">
    <property type="entry name" value="DHO_dh_type2"/>
    <property type="match status" value="1"/>
</dbReference>
<dbReference type="InterPro" id="IPR013785">
    <property type="entry name" value="Aldolase_TIM"/>
</dbReference>
<dbReference type="InterPro" id="IPR050074">
    <property type="entry name" value="DHO_dehydrogenase"/>
</dbReference>
<dbReference type="InterPro" id="IPR005719">
    <property type="entry name" value="Dihydroorotate_DH_2"/>
</dbReference>
<dbReference type="InterPro" id="IPR005720">
    <property type="entry name" value="Dihydroorotate_DH_cat"/>
</dbReference>
<dbReference type="InterPro" id="IPR001295">
    <property type="entry name" value="Dihydroorotate_DH_CS"/>
</dbReference>
<dbReference type="NCBIfam" id="NF003645">
    <property type="entry name" value="PRK05286.1-2"/>
    <property type="match status" value="1"/>
</dbReference>
<dbReference type="NCBIfam" id="NF003652">
    <property type="entry name" value="PRK05286.2-5"/>
    <property type="match status" value="1"/>
</dbReference>
<dbReference type="NCBIfam" id="TIGR01036">
    <property type="entry name" value="pyrD_sub2"/>
    <property type="match status" value="1"/>
</dbReference>
<dbReference type="PANTHER" id="PTHR48109:SF4">
    <property type="entry name" value="DIHYDROOROTATE DEHYDROGENASE (QUINONE), MITOCHONDRIAL"/>
    <property type="match status" value="1"/>
</dbReference>
<dbReference type="PANTHER" id="PTHR48109">
    <property type="entry name" value="DIHYDROOROTATE DEHYDROGENASE (QUINONE), MITOCHONDRIAL-RELATED"/>
    <property type="match status" value="1"/>
</dbReference>
<dbReference type="Pfam" id="PF01180">
    <property type="entry name" value="DHO_dh"/>
    <property type="match status" value="1"/>
</dbReference>
<dbReference type="SUPFAM" id="SSF51395">
    <property type="entry name" value="FMN-linked oxidoreductases"/>
    <property type="match status" value="1"/>
</dbReference>
<dbReference type="PROSITE" id="PS00912">
    <property type="entry name" value="DHODEHASE_2"/>
    <property type="match status" value="1"/>
</dbReference>
<accession>B7KZJ5</accession>
<organism>
    <name type="scientific">Methylorubrum extorquens (strain CM4 / NCIMB 13688)</name>
    <name type="common">Methylobacterium extorquens</name>
    <dbReference type="NCBI Taxonomy" id="440085"/>
    <lineage>
        <taxon>Bacteria</taxon>
        <taxon>Pseudomonadati</taxon>
        <taxon>Pseudomonadota</taxon>
        <taxon>Alphaproteobacteria</taxon>
        <taxon>Hyphomicrobiales</taxon>
        <taxon>Methylobacteriaceae</taxon>
        <taxon>Methylorubrum</taxon>
    </lineage>
</organism>
<protein>
    <recommendedName>
        <fullName evidence="1">Dihydroorotate dehydrogenase (quinone)</fullName>
        <ecNumber evidence="1">1.3.5.2</ecNumber>
    </recommendedName>
    <alternativeName>
        <fullName evidence="1">DHOdehase</fullName>
        <shortName evidence="1">DHOD</shortName>
        <shortName evidence="1">DHODase</shortName>
    </alternativeName>
    <alternativeName>
        <fullName evidence="1">Dihydroorotate oxidase</fullName>
    </alternativeName>
</protein>
<comment type="function">
    <text evidence="1">Catalyzes the conversion of dihydroorotate to orotate with quinone as electron acceptor.</text>
</comment>
<comment type="catalytic activity">
    <reaction evidence="1">
        <text>(S)-dihydroorotate + a quinone = orotate + a quinol</text>
        <dbReference type="Rhea" id="RHEA:30187"/>
        <dbReference type="ChEBI" id="CHEBI:24646"/>
        <dbReference type="ChEBI" id="CHEBI:30839"/>
        <dbReference type="ChEBI" id="CHEBI:30864"/>
        <dbReference type="ChEBI" id="CHEBI:132124"/>
        <dbReference type="EC" id="1.3.5.2"/>
    </reaction>
</comment>
<comment type="cofactor">
    <cofactor evidence="1">
        <name>FMN</name>
        <dbReference type="ChEBI" id="CHEBI:58210"/>
    </cofactor>
    <text evidence="1">Binds 1 FMN per subunit.</text>
</comment>
<comment type="pathway">
    <text evidence="1">Pyrimidine metabolism; UMP biosynthesis via de novo pathway; orotate from (S)-dihydroorotate (quinone route): step 1/1.</text>
</comment>
<comment type="subunit">
    <text evidence="1">Monomer.</text>
</comment>
<comment type="subcellular location">
    <subcellularLocation>
        <location evidence="1">Cell membrane</location>
        <topology evidence="1">Peripheral membrane protein</topology>
    </subcellularLocation>
</comment>
<comment type="similarity">
    <text evidence="1">Belongs to the dihydroorotate dehydrogenase family. Type 2 subfamily.</text>
</comment>
<gene>
    <name evidence="1" type="primary">pyrD</name>
    <name type="ordered locus">Mchl_2382</name>
</gene>
<sequence>MIDALFPLARPLLHGLDAETAHDLTIRGLSLLPPRRPPADDASLAVEMFGQSFPNPVGLAAGFDKGARVADALLGLGFGFVEVGGVVPQPQPGNPRPRVFRLPRDRAVINRFGLNSEGLDAVADRLKARAGREGIVGVNIGANKESADRLADYVACTARLAPHVAFITVNVSSPNTPGLRDLQGEAFLDDLLARVVAARDASGSSAAVLLKIAPDIALEGLDAMTATALRRGIQGLVVSNTTIARPSSLVESSVAKETGGLSGRPLFGLSTRLLAETYLRVGDRIPLIGVGGIDSAEAAWAKIRAGARLVQLYSALVYEGPGLVGTIKRGLSQRLRAEGLTSLAPVVGRDAAALARDA</sequence>
<evidence type="ECO:0000255" key="1">
    <source>
        <dbReference type="HAMAP-Rule" id="MF_00225"/>
    </source>
</evidence>
<proteinExistence type="inferred from homology"/>